<dbReference type="EMBL" id="CP000472">
    <property type="protein sequence ID" value="ACJ27528.1"/>
    <property type="molecule type" value="Genomic_DNA"/>
</dbReference>
<dbReference type="RefSeq" id="WP_020910909.1">
    <property type="nucleotide sequence ID" value="NC_011566.1"/>
</dbReference>
<dbReference type="SMR" id="B8CIQ2"/>
<dbReference type="STRING" id="225849.swp_0712"/>
<dbReference type="KEGG" id="swp:swp_0712"/>
<dbReference type="eggNOG" id="COG2965">
    <property type="taxonomic scope" value="Bacteria"/>
</dbReference>
<dbReference type="HOGENOM" id="CLU_166075_0_0_6"/>
<dbReference type="OrthoDB" id="9180733at2"/>
<dbReference type="Proteomes" id="UP000000753">
    <property type="component" value="Chromosome"/>
</dbReference>
<dbReference type="GO" id="GO:1990077">
    <property type="term" value="C:primosome complex"/>
    <property type="evidence" value="ECO:0007669"/>
    <property type="project" value="UniProtKB-KW"/>
</dbReference>
<dbReference type="GO" id="GO:0003697">
    <property type="term" value="F:single-stranded DNA binding"/>
    <property type="evidence" value="ECO:0007669"/>
    <property type="project" value="UniProtKB-UniRule"/>
</dbReference>
<dbReference type="GO" id="GO:0006269">
    <property type="term" value="P:DNA replication, synthesis of primer"/>
    <property type="evidence" value="ECO:0007669"/>
    <property type="project" value="UniProtKB-KW"/>
</dbReference>
<dbReference type="Gene3D" id="2.40.50.140">
    <property type="entry name" value="Nucleic acid-binding proteins"/>
    <property type="match status" value="1"/>
</dbReference>
<dbReference type="HAMAP" id="MF_00720">
    <property type="entry name" value="PriB"/>
    <property type="match status" value="1"/>
</dbReference>
<dbReference type="InterPro" id="IPR012340">
    <property type="entry name" value="NA-bd_OB-fold"/>
</dbReference>
<dbReference type="InterPro" id="IPR000424">
    <property type="entry name" value="Primosome_PriB/ssb"/>
</dbReference>
<dbReference type="InterPro" id="IPR023646">
    <property type="entry name" value="Prisomal_replication_PriB"/>
</dbReference>
<dbReference type="NCBIfam" id="TIGR04418">
    <property type="entry name" value="PriB_gamma"/>
    <property type="match status" value="1"/>
</dbReference>
<dbReference type="Pfam" id="PF22657">
    <property type="entry name" value="SSB_1"/>
    <property type="match status" value="1"/>
</dbReference>
<dbReference type="PIRSF" id="PIRSF003135">
    <property type="entry name" value="Primosomal_n"/>
    <property type="match status" value="1"/>
</dbReference>
<dbReference type="SUPFAM" id="SSF50249">
    <property type="entry name" value="Nucleic acid-binding proteins"/>
    <property type="match status" value="1"/>
</dbReference>
<dbReference type="PROSITE" id="PS50935">
    <property type="entry name" value="SSB"/>
    <property type="match status" value="1"/>
</dbReference>
<comment type="function">
    <text evidence="1">Involved in the restart of stalled replication forks, which reloads the replicative helicase on sites other than the origin of replication; the PriA-PriB pathway is the major replication restart pathway. During primosome assembly it facilitates complex formation between PriA and DnaT on DNA; stabilizes PriA on DNA. Stimulates the DNA unwinding activity of PriA helicase.</text>
</comment>
<comment type="subunit">
    <text evidence="1">Homodimer. Interacts with PriA and DnaT. Component of the replication restart primosome. Primosome assembly occurs via a 'hand-off' mechanism. PriA binds to replication forks, subsequently PriB then DnaT bind; DnaT then displaces ssDNA to generate the helicase loading substrate.</text>
</comment>
<comment type="similarity">
    <text evidence="1">Belongs to the PriB family.</text>
</comment>
<evidence type="ECO:0000255" key="1">
    <source>
        <dbReference type="HAMAP-Rule" id="MF_00720"/>
    </source>
</evidence>
<proteinExistence type="inferred from homology"/>
<gene>
    <name evidence="1" type="primary">priB</name>
    <name type="ordered locus">swp_0712</name>
</gene>
<accession>B8CIQ2</accession>
<sequence>MTTNNLVLAGTITRSRRFDSPAGIAHTVLMLEHKSQRYEAEMLRNVYCQIQVVLSGERFNSVTENLKAGVEIQVEGFLNLQQSRNGQNRLVLHAENVELKT</sequence>
<organism>
    <name type="scientific">Shewanella piezotolerans (strain WP3 / JCM 13877)</name>
    <dbReference type="NCBI Taxonomy" id="225849"/>
    <lineage>
        <taxon>Bacteria</taxon>
        <taxon>Pseudomonadati</taxon>
        <taxon>Pseudomonadota</taxon>
        <taxon>Gammaproteobacteria</taxon>
        <taxon>Alteromonadales</taxon>
        <taxon>Shewanellaceae</taxon>
        <taxon>Shewanella</taxon>
    </lineage>
</organism>
<protein>
    <recommendedName>
        <fullName evidence="1">Replication restart protein PriB</fullName>
    </recommendedName>
</protein>
<keyword id="KW-0235">DNA replication</keyword>
<keyword id="KW-0238">DNA-binding</keyword>
<keyword id="KW-0639">Primosome</keyword>
<feature type="chain" id="PRO_1000132634" description="Replication restart protein PriB">
    <location>
        <begin position="1"/>
        <end position="101"/>
    </location>
</feature>
<feature type="domain" description="SSB" evidence="1">
    <location>
        <begin position="1"/>
        <end position="101"/>
    </location>
</feature>
<name>PRIB_SHEPW</name>
<reference key="1">
    <citation type="journal article" date="2008" name="PLoS ONE">
        <title>Environmental adaptation: genomic analysis of the piezotolerant and psychrotolerant deep-sea iron reducing bacterium Shewanella piezotolerans WP3.</title>
        <authorList>
            <person name="Wang F."/>
            <person name="Wang J."/>
            <person name="Jian H."/>
            <person name="Zhang B."/>
            <person name="Li S."/>
            <person name="Wang F."/>
            <person name="Zeng X."/>
            <person name="Gao L."/>
            <person name="Bartlett D.H."/>
            <person name="Yu J."/>
            <person name="Hu S."/>
            <person name="Xiao X."/>
        </authorList>
    </citation>
    <scope>NUCLEOTIDE SEQUENCE [LARGE SCALE GENOMIC DNA]</scope>
    <source>
        <strain>WP3 / JCM 13877</strain>
    </source>
</reference>